<sequence length="219" mass="24609">MKAINIALDGPAAAGKSTIAKRVASELSMIYVDTGAMYRALTYKYLKLNKTEDFAKLVDQTTLDLTYKADKGQCVILDNEDVTDFLRNNDVTQHVSYVASKEPVRSFAVKKQKELAAEKGIVMDGRDIGTVVLPDADLKVYMIASVEERAERRYKDNQLRGIESNFEDLKRDIEARDQYDMNREISPLRKADDAVTLDTTGKTIEEVTDEILAMVSQIK</sequence>
<accession>Q6GGT4</accession>
<reference key="1">
    <citation type="journal article" date="2004" name="Proc. Natl. Acad. Sci. U.S.A.">
        <title>Complete genomes of two clinical Staphylococcus aureus strains: evidence for the rapid evolution of virulence and drug resistance.</title>
        <authorList>
            <person name="Holden M.T.G."/>
            <person name="Feil E.J."/>
            <person name="Lindsay J.A."/>
            <person name="Peacock S.J."/>
            <person name="Day N.P.J."/>
            <person name="Enright M.C."/>
            <person name="Foster T.J."/>
            <person name="Moore C.E."/>
            <person name="Hurst L."/>
            <person name="Atkin R."/>
            <person name="Barron A."/>
            <person name="Bason N."/>
            <person name="Bentley S.D."/>
            <person name="Chillingworth C."/>
            <person name="Chillingworth T."/>
            <person name="Churcher C."/>
            <person name="Clark L."/>
            <person name="Corton C."/>
            <person name="Cronin A."/>
            <person name="Doggett J."/>
            <person name="Dowd L."/>
            <person name="Feltwell T."/>
            <person name="Hance Z."/>
            <person name="Harris B."/>
            <person name="Hauser H."/>
            <person name="Holroyd S."/>
            <person name="Jagels K."/>
            <person name="James K.D."/>
            <person name="Lennard N."/>
            <person name="Line A."/>
            <person name="Mayes R."/>
            <person name="Moule S."/>
            <person name="Mungall K."/>
            <person name="Ormond D."/>
            <person name="Quail M.A."/>
            <person name="Rabbinowitsch E."/>
            <person name="Rutherford K.M."/>
            <person name="Sanders M."/>
            <person name="Sharp S."/>
            <person name="Simmonds M."/>
            <person name="Stevens K."/>
            <person name="Whitehead S."/>
            <person name="Barrell B.G."/>
            <person name="Spratt B.G."/>
            <person name="Parkhill J."/>
        </authorList>
    </citation>
    <scope>NUCLEOTIDE SEQUENCE [LARGE SCALE GENOMIC DNA]</scope>
    <source>
        <strain>MRSA252</strain>
    </source>
</reference>
<keyword id="KW-0067">ATP-binding</keyword>
<keyword id="KW-0963">Cytoplasm</keyword>
<keyword id="KW-0418">Kinase</keyword>
<keyword id="KW-0547">Nucleotide-binding</keyword>
<keyword id="KW-0808">Transferase</keyword>
<feature type="chain" id="PRO_0000131975" description="Cytidylate kinase">
    <location>
        <begin position="1"/>
        <end position="219"/>
    </location>
</feature>
<feature type="binding site" evidence="1">
    <location>
        <begin position="10"/>
        <end position="18"/>
    </location>
    <ligand>
        <name>ATP</name>
        <dbReference type="ChEBI" id="CHEBI:30616"/>
    </ligand>
</feature>
<proteinExistence type="inferred from homology"/>
<evidence type="ECO:0000255" key="1">
    <source>
        <dbReference type="HAMAP-Rule" id="MF_00238"/>
    </source>
</evidence>
<dbReference type="EC" id="2.7.4.25" evidence="1"/>
<dbReference type="EMBL" id="BX571856">
    <property type="protein sequence ID" value="CAG40484.1"/>
    <property type="molecule type" value="Genomic_DNA"/>
</dbReference>
<dbReference type="RefSeq" id="WP_000644393.1">
    <property type="nucleotide sequence ID" value="NC_002952.2"/>
</dbReference>
<dbReference type="SMR" id="Q6GGT4"/>
<dbReference type="KEGG" id="sar:SAR1486"/>
<dbReference type="HOGENOM" id="CLU_079959_0_2_9"/>
<dbReference type="Proteomes" id="UP000000596">
    <property type="component" value="Chromosome"/>
</dbReference>
<dbReference type="GO" id="GO:0005829">
    <property type="term" value="C:cytosol"/>
    <property type="evidence" value="ECO:0007669"/>
    <property type="project" value="TreeGrafter"/>
</dbReference>
<dbReference type="GO" id="GO:0005524">
    <property type="term" value="F:ATP binding"/>
    <property type="evidence" value="ECO:0007669"/>
    <property type="project" value="UniProtKB-UniRule"/>
</dbReference>
<dbReference type="GO" id="GO:0036430">
    <property type="term" value="F:CMP kinase activity"/>
    <property type="evidence" value="ECO:0007669"/>
    <property type="project" value="RHEA"/>
</dbReference>
<dbReference type="GO" id="GO:0036431">
    <property type="term" value="F:dCMP kinase activity"/>
    <property type="evidence" value="ECO:0007669"/>
    <property type="project" value="RHEA"/>
</dbReference>
<dbReference type="GO" id="GO:0015949">
    <property type="term" value="P:nucleobase-containing small molecule interconversion"/>
    <property type="evidence" value="ECO:0007669"/>
    <property type="project" value="TreeGrafter"/>
</dbReference>
<dbReference type="GO" id="GO:0006220">
    <property type="term" value="P:pyrimidine nucleotide metabolic process"/>
    <property type="evidence" value="ECO:0007669"/>
    <property type="project" value="UniProtKB-UniRule"/>
</dbReference>
<dbReference type="CDD" id="cd02020">
    <property type="entry name" value="CMPK"/>
    <property type="match status" value="1"/>
</dbReference>
<dbReference type="Gene3D" id="3.40.50.300">
    <property type="entry name" value="P-loop containing nucleotide triphosphate hydrolases"/>
    <property type="match status" value="1"/>
</dbReference>
<dbReference type="HAMAP" id="MF_00238">
    <property type="entry name" value="Cytidyl_kinase_type1"/>
    <property type="match status" value="1"/>
</dbReference>
<dbReference type="InterPro" id="IPR003136">
    <property type="entry name" value="Cytidylate_kin"/>
</dbReference>
<dbReference type="InterPro" id="IPR011994">
    <property type="entry name" value="Cytidylate_kinase_dom"/>
</dbReference>
<dbReference type="InterPro" id="IPR027417">
    <property type="entry name" value="P-loop_NTPase"/>
</dbReference>
<dbReference type="NCBIfam" id="TIGR00017">
    <property type="entry name" value="cmk"/>
    <property type="match status" value="1"/>
</dbReference>
<dbReference type="PANTHER" id="PTHR21299:SF2">
    <property type="entry name" value="CYTIDYLATE KINASE"/>
    <property type="match status" value="1"/>
</dbReference>
<dbReference type="PANTHER" id="PTHR21299">
    <property type="entry name" value="CYTIDYLATE KINASE/PANTOATE-BETA-ALANINE LIGASE"/>
    <property type="match status" value="1"/>
</dbReference>
<dbReference type="Pfam" id="PF02224">
    <property type="entry name" value="Cytidylate_kin"/>
    <property type="match status" value="1"/>
</dbReference>
<dbReference type="SUPFAM" id="SSF52540">
    <property type="entry name" value="P-loop containing nucleoside triphosphate hydrolases"/>
    <property type="match status" value="1"/>
</dbReference>
<gene>
    <name evidence="1" type="primary">cmk</name>
    <name type="ordered locus">SAR1486</name>
</gene>
<protein>
    <recommendedName>
        <fullName evidence="1">Cytidylate kinase</fullName>
        <shortName evidence="1">CK</shortName>
        <ecNumber evidence="1">2.7.4.25</ecNumber>
    </recommendedName>
    <alternativeName>
        <fullName evidence="1">Cytidine monophosphate kinase</fullName>
        <shortName evidence="1">CMP kinase</shortName>
    </alternativeName>
</protein>
<organism>
    <name type="scientific">Staphylococcus aureus (strain MRSA252)</name>
    <dbReference type="NCBI Taxonomy" id="282458"/>
    <lineage>
        <taxon>Bacteria</taxon>
        <taxon>Bacillati</taxon>
        <taxon>Bacillota</taxon>
        <taxon>Bacilli</taxon>
        <taxon>Bacillales</taxon>
        <taxon>Staphylococcaceae</taxon>
        <taxon>Staphylococcus</taxon>
    </lineage>
</organism>
<comment type="catalytic activity">
    <reaction evidence="1">
        <text>CMP + ATP = CDP + ADP</text>
        <dbReference type="Rhea" id="RHEA:11600"/>
        <dbReference type="ChEBI" id="CHEBI:30616"/>
        <dbReference type="ChEBI" id="CHEBI:58069"/>
        <dbReference type="ChEBI" id="CHEBI:60377"/>
        <dbReference type="ChEBI" id="CHEBI:456216"/>
        <dbReference type="EC" id="2.7.4.25"/>
    </reaction>
</comment>
<comment type="catalytic activity">
    <reaction evidence="1">
        <text>dCMP + ATP = dCDP + ADP</text>
        <dbReference type="Rhea" id="RHEA:25094"/>
        <dbReference type="ChEBI" id="CHEBI:30616"/>
        <dbReference type="ChEBI" id="CHEBI:57566"/>
        <dbReference type="ChEBI" id="CHEBI:58593"/>
        <dbReference type="ChEBI" id="CHEBI:456216"/>
        <dbReference type="EC" id="2.7.4.25"/>
    </reaction>
</comment>
<comment type="subcellular location">
    <subcellularLocation>
        <location evidence="1">Cytoplasm</location>
    </subcellularLocation>
</comment>
<comment type="similarity">
    <text evidence="1">Belongs to the cytidylate kinase family. Type 1 subfamily.</text>
</comment>
<name>KCY_STAAR</name>